<gene>
    <name type="ordered locus">PH1314</name>
</gene>
<accession>O59052</accession>
<dbReference type="EMBL" id="BA000001">
    <property type="protein sequence ID" value="BAA30420.1"/>
    <property type="molecule type" value="Genomic_DNA"/>
</dbReference>
<dbReference type="PIR" id="D71002">
    <property type="entry name" value="D71002"/>
</dbReference>
<dbReference type="STRING" id="70601.gene:9378287"/>
<dbReference type="EnsemblBacteria" id="BAA30420">
    <property type="protein sequence ID" value="BAA30420"/>
    <property type="gene ID" value="BAA30420"/>
</dbReference>
<dbReference type="KEGG" id="pho:PH1314"/>
<dbReference type="eggNOG" id="arCOG05084">
    <property type="taxonomic scope" value="Archaea"/>
</dbReference>
<dbReference type="Proteomes" id="UP000000752">
    <property type="component" value="Chromosome"/>
</dbReference>
<dbReference type="HAMAP" id="MF_00264">
    <property type="entry name" value="UPF0128"/>
    <property type="match status" value="1"/>
</dbReference>
<dbReference type="InterPro" id="IPR005266">
    <property type="entry name" value="UPF0128"/>
</dbReference>
<dbReference type="NCBIfam" id="TIGR00703">
    <property type="entry name" value="TIGR00703 family protein"/>
    <property type="match status" value="1"/>
</dbReference>
<dbReference type="Pfam" id="PF03673">
    <property type="entry name" value="UPF0128"/>
    <property type="match status" value="1"/>
</dbReference>
<dbReference type="PIRSF" id="PIRSF016179">
    <property type="entry name" value="UCP016179"/>
    <property type="match status" value="1"/>
</dbReference>
<organism>
    <name type="scientific">Pyrococcus horikoshii (strain ATCC 700860 / DSM 12428 / JCM 9974 / NBRC 100139 / OT-3)</name>
    <dbReference type="NCBI Taxonomy" id="70601"/>
    <lineage>
        <taxon>Archaea</taxon>
        <taxon>Methanobacteriati</taxon>
        <taxon>Methanobacteriota</taxon>
        <taxon>Thermococci</taxon>
        <taxon>Thermococcales</taxon>
        <taxon>Thermococcaceae</taxon>
        <taxon>Pyrococcus</taxon>
    </lineage>
</organism>
<protein>
    <recommendedName>
        <fullName>UPF0128 protein PH1314</fullName>
    </recommendedName>
</protein>
<sequence length="225" mass="26865">MIKMLEGYYIIENPGVVPAERRFRMKDLKAWGYDLHLGTIEGERAYFISKTGERHEGETYIFKGKEYHVSRTQKEIPENARLLARIIIERGNPYLEVWLEEEDVKFPLTKEDPRIILKRIWEKEKLNQLLKHVRAVGLTTDFYKDNVFTQGIPLPYEEYPPKVRRVLREVKDIHRDLTGFGRFVFQYFGEVDKMHNYRLYWTLPTLHLFDIDIANEVDKVLGMLD</sequence>
<evidence type="ECO:0000305" key="1"/>
<feature type="chain" id="PRO_0000185228" description="UPF0128 protein PH1314">
    <location>
        <begin position="1"/>
        <end position="225"/>
    </location>
</feature>
<reference key="1">
    <citation type="journal article" date="1998" name="DNA Res.">
        <title>Complete sequence and gene organization of the genome of a hyper-thermophilic archaebacterium, Pyrococcus horikoshii OT3.</title>
        <authorList>
            <person name="Kawarabayasi Y."/>
            <person name="Sawada M."/>
            <person name="Horikawa H."/>
            <person name="Haikawa Y."/>
            <person name="Hino Y."/>
            <person name="Yamamoto S."/>
            <person name="Sekine M."/>
            <person name="Baba S."/>
            <person name="Kosugi H."/>
            <person name="Hosoyama A."/>
            <person name="Nagai Y."/>
            <person name="Sakai M."/>
            <person name="Ogura K."/>
            <person name="Otsuka R."/>
            <person name="Nakazawa H."/>
            <person name="Takamiya M."/>
            <person name="Ohfuku Y."/>
            <person name="Funahashi T."/>
            <person name="Tanaka T."/>
            <person name="Kudoh Y."/>
            <person name="Yamazaki J."/>
            <person name="Kushida N."/>
            <person name="Oguchi A."/>
            <person name="Aoki K."/>
            <person name="Yoshizawa T."/>
            <person name="Nakamura Y."/>
            <person name="Robb F.T."/>
            <person name="Horikoshi K."/>
            <person name="Masuchi Y."/>
            <person name="Shizuya H."/>
            <person name="Kikuchi H."/>
        </authorList>
    </citation>
    <scope>NUCLEOTIDE SEQUENCE [LARGE SCALE GENOMIC DNA]</scope>
    <source>
        <strain>ATCC 700860 / DSM 12428 / JCM 9974 / NBRC 100139 / OT-3</strain>
    </source>
</reference>
<comment type="similarity">
    <text evidence="1">Belongs to the UPF0128 family.</text>
</comment>
<proteinExistence type="inferred from homology"/>
<name>Y1314_PYRHO</name>